<feature type="chain" id="PRO_0000078225" description="Endothelin-converting enzyme-like 1">
    <location>
        <begin position="1"/>
        <end position="775"/>
    </location>
</feature>
<feature type="topological domain" description="Cytoplasmic" evidence="2">
    <location>
        <begin position="1"/>
        <end position="61"/>
    </location>
</feature>
<feature type="transmembrane region" description="Helical; Signal-anchor for type II membrane protein" evidence="2">
    <location>
        <begin position="62"/>
        <end position="82"/>
    </location>
</feature>
<feature type="topological domain" description="Lumenal" evidence="2">
    <location>
        <begin position="83"/>
        <end position="775"/>
    </location>
</feature>
<feature type="domain" description="Peptidase M13" evidence="3">
    <location>
        <begin position="99"/>
        <end position="775"/>
    </location>
</feature>
<feature type="region of interest" description="Disordered" evidence="5">
    <location>
        <begin position="30"/>
        <end position="52"/>
    </location>
</feature>
<feature type="compositionally biased region" description="Low complexity" evidence="5">
    <location>
        <begin position="32"/>
        <end position="52"/>
    </location>
</feature>
<feature type="active site" evidence="3 4">
    <location>
        <position position="613"/>
    </location>
</feature>
<feature type="active site" description="Proton donor" evidence="3">
    <location>
        <position position="676"/>
    </location>
</feature>
<feature type="binding site" evidence="3 4">
    <location>
        <position position="612"/>
    </location>
    <ligand>
        <name>Zn(2+)</name>
        <dbReference type="ChEBI" id="CHEBI:29105"/>
        <note>catalytic</note>
    </ligand>
</feature>
<feature type="binding site" evidence="3 4">
    <location>
        <position position="616"/>
    </location>
    <ligand>
        <name>Zn(2+)</name>
        <dbReference type="ChEBI" id="CHEBI:29105"/>
        <note>catalytic</note>
    </ligand>
</feature>
<feature type="binding site" evidence="3">
    <location>
        <position position="672"/>
    </location>
    <ligand>
        <name>Zn(2+)</name>
        <dbReference type="ChEBI" id="CHEBI:29105"/>
        <note>catalytic</note>
    </ligand>
</feature>
<feature type="glycosylation site" description="N-linked (GlcNAc...) asparagine" evidence="2">
    <location>
        <position position="255"/>
    </location>
</feature>
<feature type="glycosylation site" description="N-linked (GlcNAc...) asparagine" evidence="2">
    <location>
        <position position="322"/>
    </location>
</feature>
<feature type="glycosylation site" description="N-linked (GlcNAc...) asparagine" evidence="2">
    <location>
        <position position="656"/>
    </location>
</feature>
<feature type="disulfide bond" evidence="3">
    <location>
        <begin position="124"/>
        <end position="760"/>
    </location>
</feature>
<feature type="disulfide bond" evidence="3">
    <location>
        <begin position="132"/>
        <end position="720"/>
    </location>
</feature>
<feature type="disulfide bond" evidence="3">
    <location>
        <begin position="188"/>
        <end position="441"/>
    </location>
</feature>
<feature type="disulfide bond" evidence="3">
    <location>
        <begin position="649"/>
        <end position="772"/>
    </location>
</feature>
<feature type="sequence conflict" description="In Ref. 1; BAA95005." evidence="8" ref="1">
    <original>S</original>
    <variation>T</variation>
    <location>
        <position position="562"/>
    </location>
</feature>
<feature type="sequence conflict" description="In Ref. 1; BAA95005." evidence="8" ref="1">
    <original>F</original>
    <variation>Y</variation>
    <location>
        <position position="583"/>
    </location>
</feature>
<feature type="sequence conflict" description="In Ref. 1; BAA95005." evidence="8" ref="1">
    <original>T</original>
    <variation>A</variation>
    <location>
        <position position="638"/>
    </location>
</feature>
<feature type="sequence conflict" description="In Ref. 1; BAA95005." evidence="8" ref="1">
    <original>H</original>
    <variation>R</variation>
    <location>
        <position position="642"/>
    </location>
</feature>
<feature type="sequence conflict" description="In Ref. 1; BAA95005." evidence="8" ref="1">
    <original>R</original>
    <variation>H</variation>
    <location>
        <position position="645"/>
    </location>
</feature>
<name>ECEL1_MOUSE</name>
<proteinExistence type="evidence at transcript level"/>
<comment type="function">
    <text>May contribute to the degradation of peptide hormones and be involved in the inactivation of neuronal peptides.</text>
</comment>
<comment type="cofactor">
    <cofactor evidence="1">
        <name>Zn(2+)</name>
        <dbReference type="ChEBI" id="CHEBI:29105"/>
    </cofactor>
    <text evidence="1">Binds 1 zinc ion.</text>
</comment>
<comment type="subcellular location">
    <subcellularLocation>
        <location evidence="1">Membrane</location>
        <topology evidence="1">Single-pass type II membrane protein</topology>
    </subcellularLocation>
</comment>
<comment type="disruption phenotype">
    <text evidence="6 7">According to a report, mice die of respiratory failure shortly after birth (PubMed:10400672). According to a second report, mice exhibit perturbed terminal branching of motor neurons to the endplate of skeletal muscles, resulting in poor formation of the neuromuscular junction (PubMed:23261301).</text>
</comment>
<comment type="similarity">
    <text evidence="3 8">Belongs to the peptidase M13 family.</text>
</comment>
<gene>
    <name type="primary">Ecel1</name>
    <name type="synonym">Dine</name>
    <name type="synonym">Xce</name>
</gene>
<keyword id="KW-1015">Disulfide bond</keyword>
<keyword id="KW-0325">Glycoprotein</keyword>
<keyword id="KW-0378">Hydrolase</keyword>
<keyword id="KW-0472">Membrane</keyword>
<keyword id="KW-0479">Metal-binding</keyword>
<keyword id="KW-0482">Metalloprotease</keyword>
<keyword id="KW-0645">Protease</keyword>
<keyword id="KW-1185">Reference proteome</keyword>
<keyword id="KW-0735">Signal-anchor</keyword>
<keyword id="KW-0812">Transmembrane</keyword>
<keyword id="KW-1133">Transmembrane helix</keyword>
<keyword id="KW-0862">Zinc</keyword>
<reference key="1">
    <citation type="journal article" date="2000" name="Proc. Natl. Acad. Sci. U.S.A.">
        <title>Damage-induced neuronal endopeptidase (DINE) is a unique metallopeptidase expressed in response to neuronal damage and activates superoxide scavengers.</title>
        <authorList>
            <person name="Kiryu-Seo S."/>
            <person name="Sasaki M."/>
            <person name="Yokohama H."/>
            <person name="Nakagomi S."/>
            <person name="Hirayama T."/>
            <person name="Aoki S."/>
            <person name="Wada K."/>
            <person name="Kiyama H."/>
        </authorList>
    </citation>
    <scope>NUCLEOTIDE SEQUENCE [MRNA]</scope>
    <source>
        <tissue>Brain</tissue>
    </source>
</reference>
<reference key="2">
    <citation type="submission" date="2005-09" db="EMBL/GenBank/DDBJ databases">
        <authorList>
            <person name="Mural R.J."/>
            <person name="Adams M.D."/>
            <person name="Myers E.W."/>
            <person name="Smith H.O."/>
            <person name="Venter J.C."/>
        </authorList>
    </citation>
    <scope>NUCLEOTIDE SEQUENCE [LARGE SCALE GENOMIC DNA]</scope>
</reference>
<reference key="3">
    <citation type="journal article" date="2004" name="Genome Res.">
        <title>The status, quality, and expansion of the NIH full-length cDNA project: the Mammalian Gene Collection (MGC).</title>
        <authorList>
            <consortium name="The MGC Project Team"/>
        </authorList>
    </citation>
    <scope>NUCLEOTIDE SEQUENCE [LARGE SCALE MRNA]</scope>
    <source>
        <strain>C57BL/6J</strain>
        <tissue>Brain</tissue>
    </source>
</reference>
<reference key="4">
    <citation type="journal article" date="1999" name="J. Biol. Chem.">
        <title>Neonatal lethality in mice deficient in XCE, a novel member of the endothelin-converting enzyme and neutral endopeptidase family.</title>
        <authorList>
            <person name="Schweizer A."/>
            <person name="Valdenaire O."/>
            <person name="Koster A."/>
            <person name="Lang Y."/>
            <person name="Schmitt G."/>
            <person name="Lenz B."/>
            <person name="Bluethmann H."/>
            <person name="Rohrer J."/>
        </authorList>
    </citation>
    <scope>DISRUPTION PHENOTYPE</scope>
</reference>
<reference key="5">
    <citation type="journal article" date="2013" name="Am. J. Hum. Genet.">
        <title>Mutations in ECEL1 cause distal arthrogryposis type 5D.</title>
        <authorList>
            <consortium name="University of Washington Center for Mendelian Genomics"/>
            <person name="McMillin M.J."/>
            <person name="Below J.E."/>
            <person name="Shively K.M."/>
            <person name="Beck A.E."/>
            <person name="Gildersleeve H.I."/>
            <person name="Pinner J."/>
            <person name="Gogola G.R."/>
            <person name="Hecht J.T."/>
            <person name="Grange D.K."/>
            <person name="Harris D.J."/>
            <person name="Earl D.L."/>
            <person name="Jagadeesh S."/>
            <person name="Mehta S.G."/>
            <person name="Robertson S.P."/>
            <person name="Swanson J.M."/>
            <person name="Faustman E.M."/>
            <person name="Mefford H.C."/>
            <person name="Shendure J."/>
            <person name="Nickerson D.A."/>
            <person name="Bamshad M.J."/>
        </authorList>
    </citation>
    <scope>DISRUPTION PHENOTYPE</scope>
</reference>
<dbReference type="EC" id="3.4.24.-"/>
<dbReference type="EMBL" id="AB026294">
    <property type="protein sequence ID" value="BAA95005.1"/>
    <property type="molecule type" value="mRNA"/>
</dbReference>
<dbReference type="EMBL" id="CH466520">
    <property type="protein sequence ID" value="EDL40189.1"/>
    <property type="molecule type" value="Genomic_DNA"/>
</dbReference>
<dbReference type="EMBL" id="BC057569">
    <property type="protein sequence ID" value="AAH57569.1"/>
    <property type="molecule type" value="mRNA"/>
</dbReference>
<dbReference type="CCDS" id="CCDS15128.1"/>
<dbReference type="RefSeq" id="NP_001264854.1">
    <property type="nucleotide sequence ID" value="NM_001277925.2"/>
</dbReference>
<dbReference type="RefSeq" id="NP_001407080.1">
    <property type="nucleotide sequence ID" value="NM_001420151.1"/>
</dbReference>
<dbReference type="RefSeq" id="NP_001407081.1">
    <property type="nucleotide sequence ID" value="NM_001420152.1"/>
</dbReference>
<dbReference type="RefSeq" id="NP_067281.2">
    <property type="nucleotide sequence ID" value="NM_021306.3"/>
</dbReference>
<dbReference type="RefSeq" id="XP_017170387.1">
    <property type="nucleotide sequence ID" value="XM_017314898.1"/>
</dbReference>
<dbReference type="RefSeq" id="XP_017170391.1">
    <property type="nucleotide sequence ID" value="XM_017314902.1"/>
</dbReference>
<dbReference type="RefSeq" id="XP_017170392.1">
    <property type="nucleotide sequence ID" value="XM_017314903.1"/>
</dbReference>
<dbReference type="SMR" id="Q9JMI0"/>
<dbReference type="BioGRID" id="199364">
    <property type="interactions" value="3"/>
</dbReference>
<dbReference type="FunCoup" id="Q9JMI0">
    <property type="interactions" value="127"/>
</dbReference>
<dbReference type="IntAct" id="Q9JMI0">
    <property type="interactions" value="1"/>
</dbReference>
<dbReference type="STRING" id="10090.ENSMUSP00000125096"/>
<dbReference type="MEROPS" id="M13.007"/>
<dbReference type="GlyCosmos" id="Q9JMI0">
    <property type="glycosylation" value="3 sites, No reported glycans"/>
</dbReference>
<dbReference type="GlyGen" id="Q9JMI0">
    <property type="glycosylation" value="3 sites, 2 N-linked glycans (2 sites)"/>
</dbReference>
<dbReference type="iPTMnet" id="Q9JMI0"/>
<dbReference type="PhosphoSitePlus" id="Q9JMI0"/>
<dbReference type="jPOST" id="Q9JMI0"/>
<dbReference type="PaxDb" id="10090-ENSMUSP00000125557"/>
<dbReference type="ProteomicsDB" id="275429"/>
<dbReference type="Antibodypedia" id="47689">
    <property type="antibodies" value="52 antibodies from 14 providers"/>
</dbReference>
<dbReference type="DNASU" id="13599"/>
<dbReference type="Ensembl" id="ENSMUST00000027463.11">
    <property type="protein sequence ID" value="ENSMUSP00000027463.5"/>
    <property type="gene ID" value="ENSMUSG00000026247.14"/>
</dbReference>
<dbReference type="Ensembl" id="ENSMUST00000160810.2">
    <property type="protein sequence ID" value="ENSMUSP00000125557.2"/>
    <property type="gene ID" value="ENSMUSG00000026247.14"/>
</dbReference>
<dbReference type="Ensembl" id="ENSMUST00000161002.8">
    <property type="protein sequence ID" value="ENSMUSP00000125096.2"/>
    <property type="gene ID" value="ENSMUSG00000026247.14"/>
</dbReference>
<dbReference type="GeneID" id="13599"/>
<dbReference type="KEGG" id="mmu:13599"/>
<dbReference type="UCSC" id="uc007bwc.2">
    <property type="organism name" value="mouse"/>
</dbReference>
<dbReference type="AGR" id="MGI:1343461"/>
<dbReference type="CTD" id="9427"/>
<dbReference type="MGI" id="MGI:1343461">
    <property type="gene designation" value="Ecel1"/>
</dbReference>
<dbReference type="VEuPathDB" id="HostDB:ENSMUSG00000026247"/>
<dbReference type="eggNOG" id="KOG3624">
    <property type="taxonomic scope" value="Eukaryota"/>
</dbReference>
<dbReference type="GeneTree" id="ENSGT00940000157673"/>
<dbReference type="HOGENOM" id="CLU_006187_8_0_1"/>
<dbReference type="InParanoid" id="Q9JMI0"/>
<dbReference type="OMA" id="QDFIVWQ"/>
<dbReference type="OrthoDB" id="6475849at2759"/>
<dbReference type="PhylomeDB" id="Q9JMI0"/>
<dbReference type="TreeFam" id="TF315192"/>
<dbReference type="BioGRID-ORCS" id="13599">
    <property type="hits" value="0 hits in 80 CRISPR screens"/>
</dbReference>
<dbReference type="PRO" id="PR:Q9JMI0"/>
<dbReference type="Proteomes" id="UP000000589">
    <property type="component" value="Chromosome 1"/>
</dbReference>
<dbReference type="RNAct" id="Q9JMI0">
    <property type="molecule type" value="protein"/>
</dbReference>
<dbReference type="Bgee" id="ENSMUSG00000026247">
    <property type="expression patterns" value="Expressed in facial nucleus and 89 other cell types or tissues"/>
</dbReference>
<dbReference type="GO" id="GO:0005886">
    <property type="term" value="C:plasma membrane"/>
    <property type="evidence" value="ECO:0000250"/>
    <property type="project" value="MGI"/>
</dbReference>
<dbReference type="GO" id="GO:0046872">
    <property type="term" value="F:metal ion binding"/>
    <property type="evidence" value="ECO:0007669"/>
    <property type="project" value="UniProtKB-KW"/>
</dbReference>
<dbReference type="GO" id="GO:0004222">
    <property type="term" value="F:metalloendopeptidase activity"/>
    <property type="evidence" value="ECO:0000314"/>
    <property type="project" value="MGI"/>
</dbReference>
<dbReference type="GO" id="GO:0006508">
    <property type="term" value="P:proteolysis"/>
    <property type="evidence" value="ECO:0007669"/>
    <property type="project" value="UniProtKB-KW"/>
</dbReference>
<dbReference type="GO" id="GO:0003016">
    <property type="term" value="P:respiratory system process"/>
    <property type="evidence" value="ECO:0000315"/>
    <property type="project" value="UniProtKB"/>
</dbReference>
<dbReference type="CDD" id="cd08662">
    <property type="entry name" value="M13"/>
    <property type="match status" value="1"/>
</dbReference>
<dbReference type="Gene3D" id="3.40.390.10">
    <property type="entry name" value="Collagenase (Catalytic Domain)"/>
    <property type="match status" value="1"/>
</dbReference>
<dbReference type="Gene3D" id="1.10.1380.10">
    <property type="entry name" value="Neutral endopeptidase , domain2"/>
    <property type="match status" value="1"/>
</dbReference>
<dbReference type="InterPro" id="IPR024079">
    <property type="entry name" value="MetalloPept_cat_dom_sf"/>
</dbReference>
<dbReference type="InterPro" id="IPR000718">
    <property type="entry name" value="Peptidase_M13"/>
</dbReference>
<dbReference type="InterPro" id="IPR018497">
    <property type="entry name" value="Peptidase_M13_C"/>
</dbReference>
<dbReference type="InterPro" id="IPR042089">
    <property type="entry name" value="Peptidase_M13_dom_2"/>
</dbReference>
<dbReference type="InterPro" id="IPR008753">
    <property type="entry name" value="Peptidase_M13_N"/>
</dbReference>
<dbReference type="PANTHER" id="PTHR11733:SF195">
    <property type="entry name" value="ENDOTHELIN-CONVERTING ENZYME-LIKE 1"/>
    <property type="match status" value="1"/>
</dbReference>
<dbReference type="PANTHER" id="PTHR11733">
    <property type="entry name" value="ZINC METALLOPROTEASE FAMILY M13 NEPRILYSIN-RELATED"/>
    <property type="match status" value="1"/>
</dbReference>
<dbReference type="Pfam" id="PF01431">
    <property type="entry name" value="Peptidase_M13"/>
    <property type="match status" value="1"/>
</dbReference>
<dbReference type="Pfam" id="PF05649">
    <property type="entry name" value="Peptidase_M13_N"/>
    <property type="match status" value="1"/>
</dbReference>
<dbReference type="PRINTS" id="PR00786">
    <property type="entry name" value="NEPRILYSIN"/>
</dbReference>
<dbReference type="SUPFAM" id="SSF55486">
    <property type="entry name" value="Metalloproteases ('zincins'), catalytic domain"/>
    <property type="match status" value="1"/>
</dbReference>
<dbReference type="PROSITE" id="PS51885">
    <property type="entry name" value="NEPRILYSIN"/>
    <property type="match status" value="1"/>
</dbReference>
<dbReference type="PROSITE" id="PS00142">
    <property type="entry name" value="ZINC_PROTEASE"/>
    <property type="match status" value="1"/>
</dbReference>
<protein>
    <recommendedName>
        <fullName>Endothelin-converting enzyme-like 1</fullName>
        <ecNumber>3.4.24.-</ecNumber>
    </recommendedName>
    <alternativeName>
        <fullName>Damage-induced neuronal endopeptidase</fullName>
    </alternativeName>
    <alternativeName>
        <fullName>Xce protein</fullName>
    </alternativeName>
</protein>
<organism>
    <name type="scientific">Mus musculus</name>
    <name type="common">Mouse</name>
    <dbReference type="NCBI Taxonomy" id="10090"/>
    <lineage>
        <taxon>Eukaryota</taxon>
        <taxon>Metazoa</taxon>
        <taxon>Chordata</taxon>
        <taxon>Craniata</taxon>
        <taxon>Vertebrata</taxon>
        <taxon>Euteleostomi</taxon>
        <taxon>Mammalia</taxon>
        <taxon>Eutheria</taxon>
        <taxon>Euarchontoglires</taxon>
        <taxon>Glires</taxon>
        <taxon>Rodentia</taxon>
        <taxon>Myomorpha</taxon>
        <taxon>Muroidea</taxon>
        <taxon>Muridae</taxon>
        <taxon>Murinae</taxon>
        <taxon>Mus</taxon>
        <taxon>Mus</taxon>
    </lineage>
</organism>
<accession>Q9JMI0</accession>
<accession>Q6PFG4</accession>
<evidence type="ECO:0000250" key="1"/>
<evidence type="ECO:0000255" key="2"/>
<evidence type="ECO:0000255" key="3">
    <source>
        <dbReference type="PROSITE-ProRule" id="PRU01233"/>
    </source>
</evidence>
<evidence type="ECO:0000255" key="4">
    <source>
        <dbReference type="PROSITE-ProRule" id="PRU10095"/>
    </source>
</evidence>
<evidence type="ECO:0000256" key="5">
    <source>
        <dbReference type="SAM" id="MobiDB-lite"/>
    </source>
</evidence>
<evidence type="ECO:0000269" key="6">
    <source>
    </source>
</evidence>
<evidence type="ECO:0000269" key="7">
    <source>
    </source>
</evidence>
<evidence type="ECO:0000305" key="8"/>
<sequence>MEAPYSMTAHYDEFQEVKYVSRCGTGGARGTSLPPGFPRGSGRSASGSRSGLPRWNRREVCLLSGLVFAAGLCAILAAMLALKYLGPGAAGGGGACPEGCPERKAFARAARFLSANLDASIDPCQDFYSFACGGWLRRHAIPDDKLTYGTIAAIGEQNEERLRRLLARPTGGPGGAAQRKVRAFFRSCLDMREIERLGPRPMLEVIEDCGGWDLGGAADRPGAARWDLNRLLYKAQGVYSAAALFSLTVSLDDRNSSRYVIRIDQDGLTLPERTLYLAQDEESEKILAAYRVFMQRLLRLLGADAVEQKAQEILQLEQRLANISVSEYDDLRRDVSSAYNKVTLGQLQKIIPHLQWKWLLDQIFQEDFSEEEEVVLLATDYMQQVSQLIRSTPRRILHNYLVWRVVVVLSEHLSSPFREALHELAKEMEGNDKPQELARVCLGQANRHFGMALGALFVHEHFSAASKAKVQQLVEDIKYILGQRLEELDWMDAQTKAAARAKLQYMMVMVGYPDFLLKPEAVDKEYEFEVHEKTYFKNILNSIRFSIQLSVKKIRQEVDKSSWLLPPQALNAYYLPNKNQMVFPAGILQPTLYDPDFPQSLNYGGIGTIIGHELTHGYDDWGGQYDRSGNLLHWWTETSYSHFLRKAECIVRLYDNFTVYNQRVNGKHTLGENIADMGGLKLAYYAYQKWVREHGPEHPLHRLKYTHNQLFFIAFAQNWCIKRRSQSIYLQVLTDKHAPEHYRVLGSVSQFEEFGRAFHCPKDSPMNPVHKCSVW</sequence>